<accession>A5IVJ6</accession>
<keyword id="KW-0312">Gluconeogenesis</keyword>
<keyword id="KW-0324">Glycolysis</keyword>
<keyword id="KW-0413">Isomerase</keyword>
<evidence type="ECO:0000255" key="1">
    <source>
        <dbReference type="HAMAP-Rule" id="MF_01039"/>
    </source>
</evidence>
<sequence length="228" mass="26680">MPKLILCRHGQSEWNAKNLFTGWEDVNLSEQGINEATRAGEKVRENNIAIDVAFTSLLTRALDTTHYILTESKQQWIPVYKSWRLNERHYGGLQGLNKDDARKEFGEEQVHIWRRSYDVKPPAETEEQREAYLADRRYNHLDKRMMPYSESLKDTLVRVIPFWTDHISQYLLDGQTVLVSAHGNSIRALIKYLEDVSDEDIINYEIKTGAPLVYELTDDLEVIDKYYL</sequence>
<feature type="chain" id="PRO_1000084332" description="2,3-bisphosphoglycerate-dependent phosphoglycerate mutase">
    <location>
        <begin position="1"/>
        <end position="228"/>
    </location>
</feature>
<feature type="active site" description="Tele-phosphohistidine intermediate" evidence="1">
    <location>
        <position position="9"/>
    </location>
</feature>
<feature type="active site" description="Proton donor/acceptor" evidence="1">
    <location>
        <position position="87"/>
    </location>
</feature>
<feature type="binding site" evidence="1">
    <location>
        <begin position="8"/>
        <end position="15"/>
    </location>
    <ligand>
        <name>substrate</name>
    </ligand>
</feature>
<feature type="binding site" evidence="1">
    <location>
        <begin position="21"/>
        <end position="22"/>
    </location>
    <ligand>
        <name>substrate</name>
    </ligand>
</feature>
<feature type="binding site" evidence="1">
    <location>
        <position position="60"/>
    </location>
    <ligand>
        <name>substrate</name>
    </ligand>
</feature>
<feature type="binding site" evidence="1">
    <location>
        <begin position="87"/>
        <end position="90"/>
    </location>
    <ligand>
        <name>substrate</name>
    </ligand>
</feature>
<feature type="binding site" evidence="1">
    <location>
        <position position="98"/>
    </location>
    <ligand>
        <name>substrate</name>
    </ligand>
</feature>
<feature type="binding site" evidence="1">
    <location>
        <begin position="114"/>
        <end position="115"/>
    </location>
    <ligand>
        <name>substrate</name>
    </ligand>
</feature>
<feature type="binding site" evidence="1">
    <location>
        <begin position="183"/>
        <end position="184"/>
    </location>
    <ligand>
        <name>substrate</name>
    </ligand>
</feature>
<feature type="site" description="Transition state stabilizer" evidence="1">
    <location>
        <position position="182"/>
    </location>
</feature>
<dbReference type="EC" id="5.4.2.11" evidence="1"/>
<dbReference type="EMBL" id="CP000703">
    <property type="protein sequence ID" value="ABQ50219.1"/>
    <property type="molecule type" value="Genomic_DNA"/>
</dbReference>
<dbReference type="RefSeq" id="WP_001125208.1">
    <property type="nucleotide sequence ID" value="NC_009487.1"/>
</dbReference>
<dbReference type="SMR" id="A5IVJ6"/>
<dbReference type="KEGG" id="saj:SaurJH9_2442"/>
<dbReference type="HOGENOM" id="CLU_033323_1_5_9"/>
<dbReference type="UniPathway" id="UPA00109">
    <property type="reaction ID" value="UER00186"/>
</dbReference>
<dbReference type="GO" id="GO:0004619">
    <property type="term" value="F:phosphoglycerate mutase activity"/>
    <property type="evidence" value="ECO:0007669"/>
    <property type="project" value="UniProtKB-EC"/>
</dbReference>
<dbReference type="GO" id="GO:0006094">
    <property type="term" value="P:gluconeogenesis"/>
    <property type="evidence" value="ECO:0007669"/>
    <property type="project" value="UniProtKB-UniRule"/>
</dbReference>
<dbReference type="GO" id="GO:0006096">
    <property type="term" value="P:glycolytic process"/>
    <property type="evidence" value="ECO:0007669"/>
    <property type="project" value="UniProtKB-UniRule"/>
</dbReference>
<dbReference type="CDD" id="cd07067">
    <property type="entry name" value="HP_PGM_like"/>
    <property type="match status" value="1"/>
</dbReference>
<dbReference type="FunFam" id="3.40.50.1240:FF:000003">
    <property type="entry name" value="2,3-bisphosphoglycerate-dependent phosphoglycerate mutase"/>
    <property type="match status" value="1"/>
</dbReference>
<dbReference type="Gene3D" id="3.40.50.1240">
    <property type="entry name" value="Phosphoglycerate mutase-like"/>
    <property type="match status" value="1"/>
</dbReference>
<dbReference type="HAMAP" id="MF_01039">
    <property type="entry name" value="PGAM_GpmA"/>
    <property type="match status" value="1"/>
</dbReference>
<dbReference type="InterPro" id="IPR013078">
    <property type="entry name" value="His_Pase_superF_clade-1"/>
</dbReference>
<dbReference type="InterPro" id="IPR029033">
    <property type="entry name" value="His_PPase_superfam"/>
</dbReference>
<dbReference type="InterPro" id="IPR001345">
    <property type="entry name" value="PG/BPGM_mutase_AS"/>
</dbReference>
<dbReference type="InterPro" id="IPR005952">
    <property type="entry name" value="Phosphogly_mut1"/>
</dbReference>
<dbReference type="NCBIfam" id="TIGR01258">
    <property type="entry name" value="pgm_1"/>
    <property type="match status" value="1"/>
</dbReference>
<dbReference type="NCBIfam" id="NF010713">
    <property type="entry name" value="PRK14115.1"/>
    <property type="match status" value="1"/>
</dbReference>
<dbReference type="NCBIfam" id="NF010717">
    <property type="entry name" value="PRK14119.1"/>
    <property type="match status" value="1"/>
</dbReference>
<dbReference type="PANTHER" id="PTHR11931">
    <property type="entry name" value="PHOSPHOGLYCERATE MUTASE"/>
    <property type="match status" value="1"/>
</dbReference>
<dbReference type="Pfam" id="PF00300">
    <property type="entry name" value="His_Phos_1"/>
    <property type="match status" value="1"/>
</dbReference>
<dbReference type="PIRSF" id="PIRSF000709">
    <property type="entry name" value="6PFK_2-Ptase"/>
    <property type="match status" value="1"/>
</dbReference>
<dbReference type="SMART" id="SM00855">
    <property type="entry name" value="PGAM"/>
    <property type="match status" value="1"/>
</dbReference>
<dbReference type="SUPFAM" id="SSF53254">
    <property type="entry name" value="Phosphoglycerate mutase-like"/>
    <property type="match status" value="1"/>
</dbReference>
<dbReference type="PROSITE" id="PS00175">
    <property type="entry name" value="PG_MUTASE"/>
    <property type="match status" value="1"/>
</dbReference>
<proteinExistence type="inferred from homology"/>
<protein>
    <recommendedName>
        <fullName evidence="1">2,3-bisphosphoglycerate-dependent phosphoglycerate mutase</fullName>
        <shortName evidence="1">BPG-dependent PGAM</shortName>
        <shortName evidence="1">PGAM</shortName>
        <shortName evidence="1">Phosphoglyceromutase</shortName>
        <shortName evidence="1">dPGM</shortName>
        <ecNumber evidence="1">5.4.2.11</ecNumber>
    </recommendedName>
</protein>
<gene>
    <name evidence="1" type="primary">gpmA</name>
    <name type="ordered locus">SaurJH9_2442</name>
</gene>
<organism>
    <name type="scientific">Staphylococcus aureus (strain JH9)</name>
    <dbReference type="NCBI Taxonomy" id="359786"/>
    <lineage>
        <taxon>Bacteria</taxon>
        <taxon>Bacillati</taxon>
        <taxon>Bacillota</taxon>
        <taxon>Bacilli</taxon>
        <taxon>Bacillales</taxon>
        <taxon>Staphylococcaceae</taxon>
        <taxon>Staphylococcus</taxon>
    </lineage>
</organism>
<name>GPMA_STAA9</name>
<reference key="1">
    <citation type="submission" date="2007-05" db="EMBL/GenBank/DDBJ databases">
        <title>Complete sequence of chromosome of Staphylococcus aureus subsp. aureus JH9.</title>
        <authorList>
            <consortium name="US DOE Joint Genome Institute"/>
            <person name="Copeland A."/>
            <person name="Lucas S."/>
            <person name="Lapidus A."/>
            <person name="Barry K."/>
            <person name="Detter J.C."/>
            <person name="Glavina del Rio T."/>
            <person name="Hammon N."/>
            <person name="Israni S."/>
            <person name="Pitluck S."/>
            <person name="Chain P."/>
            <person name="Malfatti S."/>
            <person name="Shin M."/>
            <person name="Vergez L."/>
            <person name="Schmutz J."/>
            <person name="Larimer F."/>
            <person name="Land M."/>
            <person name="Hauser L."/>
            <person name="Kyrpides N."/>
            <person name="Kim E."/>
            <person name="Tomasz A."/>
            <person name="Richardson P."/>
        </authorList>
    </citation>
    <scope>NUCLEOTIDE SEQUENCE [LARGE SCALE GENOMIC DNA]</scope>
    <source>
        <strain>JH9</strain>
    </source>
</reference>
<comment type="function">
    <text evidence="1">Catalyzes the interconversion of 2-phosphoglycerate and 3-phosphoglycerate.</text>
</comment>
<comment type="catalytic activity">
    <reaction evidence="1">
        <text>(2R)-2-phosphoglycerate = (2R)-3-phosphoglycerate</text>
        <dbReference type="Rhea" id="RHEA:15901"/>
        <dbReference type="ChEBI" id="CHEBI:58272"/>
        <dbReference type="ChEBI" id="CHEBI:58289"/>
        <dbReference type="EC" id="5.4.2.11"/>
    </reaction>
</comment>
<comment type="pathway">
    <text evidence="1">Carbohydrate degradation; glycolysis; pyruvate from D-glyceraldehyde 3-phosphate: step 3/5.</text>
</comment>
<comment type="similarity">
    <text evidence="1">Belongs to the phosphoglycerate mutase family. BPG-dependent PGAM subfamily.</text>
</comment>